<protein>
    <recommendedName>
        <fullName evidence="1">Disulfide bond formation protein B</fullName>
    </recommendedName>
    <alternativeName>
        <fullName evidence="1">Disulfide oxidoreductase</fullName>
    </alternativeName>
</protein>
<keyword id="KW-0997">Cell inner membrane</keyword>
<keyword id="KW-1003">Cell membrane</keyword>
<keyword id="KW-0143">Chaperone</keyword>
<keyword id="KW-1015">Disulfide bond</keyword>
<keyword id="KW-0249">Electron transport</keyword>
<keyword id="KW-0472">Membrane</keyword>
<keyword id="KW-0560">Oxidoreductase</keyword>
<keyword id="KW-0676">Redox-active center</keyword>
<keyword id="KW-1185">Reference proteome</keyword>
<keyword id="KW-0812">Transmembrane</keyword>
<keyword id="KW-1133">Transmembrane helix</keyword>
<keyword id="KW-0813">Transport</keyword>
<dbReference type="EMBL" id="CP000606">
    <property type="protein sequence ID" value="ABO24042.1"/>
    <property type="molecule type" value="Genomic_DNA"/>
</dbReference>
<dbReference type="RefSeq" id="WP_011865974.1">
    <property type="nucleotide sequence ID" value="NC_009092.1"/>
</dbReference>
<dbReference type="SMR" id="A3QEZ4"/>
<dbReference type="STRING" id="323850.Shew_2176"/>
<dbReference type="KEGG" id="slo:Shew_2176"/>
<dbReference type="eggNOG" id="COG1495">
    <property type="taxonomic scope" value="Bacteria"/>
</dbReference>
<dbReference type="HOGENOM" id="CLU_098660_2_0_6"/>
<dbReference type="OrthoDB" id="3711263at2"/>
<dbReference type="Proteomes" id="UP000001558">
    <property type="component" value="Chromosome"/>
</dbReference>
<dbReference type="GO" id="GO:0005886">
    <property type="term" value="C:plasma membrane"/>
    <property type="evidence" value="ECO:0007669"/>
    <property type="project" value="UniProtKB-SubCell"/>
</dbReference>
<dbReference type="GO" id="GO:0009055">
    <property type="term" value="F:electron transfer activity"/>
    <property type="evidence" value="ECO:0007669"/>
    <property type="project" value="UniProtKB-UniRule"/>
</dbReference>
<dbReference type="GO" id="GO:0015035">
    <property type="term" value="F:protein-disulfide reductase activity"/>
    <property type="evidence" value="ECO:0007669"/>
    <property type="project" value="UniProtKB-UniRule"/>
</dbReference>
<dbReference type="GO" id="GO:0006457">
    <property type="term" value="P:protein folding"/>
    <property type="evidence" value="ECO:0007669"/>
    <property type="project" value="InterPro"/>
</dbReference>
<dbReference type="Gene3D" id="1.20.1550.10">
    <property type="entry name" value="DsbB-like"/>
    <property type="match status" value="1"/>
</dbReference>
<dbReference type="HAMAP" id="MF_00286">
    <property type="entry name" value="DsbB"/>
    <property type="match status" value="1"/>
</dbReference>
<dbReference type="InterPro" id="IPR003752">
    <property type="entry name" value="DiS_bond_form_DsbB/BdbC"/>
</dbReference>
<dbReference type="InterPro" id="IPR022920">
    <property type="entry name" value="Disulphide_bond_form_DsbB"/>
</dbReference>
<dbReference type="InterPro" id="IPR050183">
    <property type="entry name" value="DsbB"/>
</dbReference>
<dbReference type="InterPro" id="IPR023380">
    <property type="entry name" value="DsbB-like_sf"/>
</dbReference>
<dbReference type="NCBIfam" id="NF002485">
    <property type="entry name" value="PRK01749.1"/>
    <property type="match status" value="1"/>
</dbReference>
<dbReference type="PANTHER" id="PTHR36570">
    <property type="entry name" value="DISULFIDE BOND FORMATION PROTEIN B"/>
    <property type="match status" value="1"/>
</dbReference>
<dbReference type="PANTHER" id="PTHR36570:SF2">
    <property type="entry name" value="DISULFIDE BOND FORMATION PROTEIN B"/>
    <property type="match status" value="1"/>
</dbReference>
<dbReference type="Pfam" id="PF02600">
    <property type="entry name" value="DsbB"/>
    <property type="match status" value="1"/>
</dbReference>
<dbReference type="SUPFAM" id="SSF158442">
    <property type="entry name" value="DsbB-like"/>
    <property type="match status" value="1"/>
</dbReference>
<feature type="chain" id="PRO_0000298409" description="Disulfide bond formation protein B">
    <location>
        <begin position="1"/>
        <end position="171"/>
    </location>
</feature>
<feature type="topological domain" description="Cytoplasmic" evidence="1">
    <location>
        <begin position="1"/>
        <end position="13"/>
    </location>
</feature>
<feature type="transmembrane region" description="Helical" evidence="1">
    <location>
        <begin position="14"/>
        <end position="30"/>
    </location>
</feature>
<feature type="topological domain" description="Periplasmic" evidence="1">
    <location>
        <begin position="31"/>
        <end position="48"/>
    </location>
</feature>
<feature type="transmembrane region" description="Helical" evidence="1">
    <location>
        <begin position="49"/>
        <end position="64"/>
    </location>
</feature>
<feature type="topological domain" description="Cytoplasmic" evidence="1">
    <location>
        <begin position="65"/>
        <end position="71"/>
    </location>
</feature>
<feature type="transmembrane region" description="Helical" evidence="1">
    <location>
        <begin position="72"/>
        <end position="89"/>
    </location>
</feature>
<feature type="topological domain" description="Periplasmic" evidence="1">
    <location>
        <begin position="90"/>
        <end position="144"/>
    </location>
</feature>
<feature type="transmembrane region" description="Helical" evidence="1">
    <location>
        <begin position="145"/>
        <end position="163"/>
    </location>
</feature>
<feature type="topological domain" description="Cytoplasmic" evidence="1">
    <location>
        <begin position="164"/>
        <end position="171"/>
    </location>
</feature>
<feature type="disulfide bond" description="Redox-active" evidence="1">
    <location>
        <begin position="40"/>
        <end position="43"/>
    </location>
</feature>
<feature type="disulfide bond" description="Redox-active" evidence="1">
    <location>
        <begin position="104"/>
        <end position="130"/>
    </location>
</feature>
<evidence type="ECO:0000255" key="1">
    <source>
        <dbReference type="HAMAP-Rule" id="MF_00286"/>
    </source>
</evidence>
<accession>A3QEZ4</accession>
<proteinExistence type="inferred from homology"/>
<sequence length="171" mass="19145">MSALTRFAQSRLAWTLLLLTAVGLEACALFFQHVMKLDPCVMCIYQRLAVLGVLTAGLIGVVGHQFRLLRFLGVLLWGVSAAWGLKLALELVEMQTNPSPFSTCSFLPEFPEWMPLHEWFPSVFLPTGMCTDIPWEMFGITMSQWMVVAFSTYLIALVVFIVPALMPTKKA</sequence>
<reference key="1">
    <citation type="submission" date="2007-03" db="EMBL/GenBank/DDBJ databases">
        <title>Complete sequence of Shewanella loihica PV-4.</title>
        <authorList>
            <consortium name="US DOE Joint Genome Institute"/>
            <person name="Copeland A."/>
            <person name="Lucas S."/>
            <person name="Lapidus A."/>
            <person name="Barry K."/>
            <person name="Detter J.C."/>
            <person name="Glavina del Rio T."/>
            <person name="Hammon N."/>
            <person name="Israni S."/>
            <person name="Dalin E."/>
            <person name="Tice H."/>
            <person name="Pitluck S."/>
            <person name="Chain P."/>
            <person name="Malfatti S."/>
            <person name="Shin M."/>
            <person name="Vergez L."/>
            <person name="Schmutz J."/>
            <person name="Larimer F."/>
            <person name="Land M."/>
            <person name="Hauser L."/>
            <person name="Kyrpides N."/>
            <person name="Mikhailova N."/>
            <person name="Romine M.F."/>
            <person name="Serres G."/>
            <person name="Fredrickson J."/>
            <person name="Tiedje J."/>
            <person name="Richardson P."/>
        </authorList>
    </citation>
    <scope>NUCLEOTIDE SEQUENCE [LARGE SCALE GENOMIC DNA]</scope>
    <source>
        <strain>ATCC BAA-1088 / PV-4</strain>
    </source>
</reference>
<name>DSBB_SHELP</name>
<gene>
    <name evidence="1" type="primary">dsbB</name>
    <name type="ordered locus">Shew_2176</name>
</gene>
<comment type="function">
    <text evidence="1">Required for disulfide bond formation in some periplasmic proteins. Acts by oxidizing the DsbA protein.</text>
</comment>
<comment type="subcellular location">
    <subcellularLocation>
        <location evidence="1">Cell inner membrane</location>
        <topology evidence="1">Multi-pass membrane protein</topology>
    </subcellularLocation>
</comment>
<comment type="similarity">
    <text evidence="1">Belongs to the DsbB family.</text>
</comment>
<organism>
    <name type="scientific">Shewanella loihica (strain ATCC BAA-1088 / PV-4)</name>
    <dbReference type="NCBI Taxonomy" id="323850"/>
    <lineage>
        <taxon>Bacteria</taxon>
        <taxon>Pseudomonadati</taxon>
        <taxon>Pseudomonadota</taxon>
        <taxon>Gammaproteobacteria</taxon>
        <taxon>Alteromonadales</taxon>
        <taxon>Shewanellaceae</taxon>
        <taxon>Shewanella</taxon>
    </lineage>
</organism>